<name>SC232_SCHPO</name>
<gene>
    <name type="primary">sec232</name>
    <name type="synonym">sec23b</name>
    <name type="ORF">SPBC776.04</name>
</gene>
<reference key="1">
    <citation type="journal article" date="2002" name="Nature">
        <title>The genome sequence of Schizosaccharomyces pombe.</title>
        <authorList>
            <person name="Wood V."/>
            <person name="Gwilliam R."/>
            <person name="Rajandream M.A."/>
            <person name="Lyne M.H."/>
            <person name="Lyne R."/>
            <person name="Stewart A."/>
            <person name="Sgouros J.G."/>
            <person name="Peat N."/>
            <person name="Hayles J."/>
            <person name="Baker S.G."/>
            <person name="Basham D."/>
            <person name="Bowman S."/>
            <person name="Brooks K."/>
            <person name="Brown D."/>
            <person name="Brown S."/>
            <person name="Chillingworth T."/>
            <person name="Churcher C.M."/>
            <person name="Collins M."/>
            <person name="Connor R."/>
            <person name="Cronin A."/>
            <person name="Davis P."/>
            <person name="Feltwell T."/>
            <person name="Fraser A."/>
            <person name="Gentles S."/>
            <person name="Goble A."/>
            <person name="Hamlin N."/>
            <person name="Harris D.E."/>
            <person name="Hidalgo J."/>
            <person name="Hodgson G."/>
            <person name="Holroyd S."/>
            <person name="Hornsby T."/>
            <person name="Howarth S."/>
            <person name="Huckle E.J."/>
            <person name="Hunt S."/>
            <person name="Jagels K."/>
            <person name="James K.D."/>
            <person name="Jones L."/>
            <person name="Jones M."/>
            <person name="Leather S."/>
            <person name="McDonald S."/>
            <person name="McLean J."/>
            <person name="Mooney P."/>
            <person name="Moule S."/>
            <person name="Mungall K.L."/>
            <person name="Murphy L.D."/>
            <person name="Niblett D."/>
            <person name="Odell C."/>
            <person name="Oliver K."/>
            <person name="O'Neil S."/>
            <person name="Pearson D."/>
            <person name="Quail M.A."/>
            <person name="Rabbinowitsch E."/>
            <person name="Rutherford K.M."/>
            <person name="Rutter S."/>
            <person name="Saunders D."/>
            <person name="Seeger K."/>
            <person name="Sharp S."/>
            <person name="Skelton J."/>
            <person name="Simmonds M.N."/>
            <person name="Squares R."/>
            <person name="Squares S."/>
            <person name="Stevens K."/>
            <person name="Taylor K."/>
            <person name="Taylor R.G."/>
            <person name="Tivey A."/>
            <person name="Walsh S.V."/>
            <person name="Warren T."/>
            <person name="Whitehead S."/>
            <person name="Woodward J.R."/>
            <person name="Volckaert G."/>
            <person name="Aert R."/>
            <person name="Robben J."/>
            <person name="Grymonprez B."/>
            <person name="Weltjens I."/>
            <person name="Vanstreels E."/>
            <person name="Rieger M."/>
            <person name="Schaefer M."/>
            <person name="Mueller-Auer S."/>
            <person name="Gabel C."/>
            <person name="Fuchs M."/>
            <person name="Duesterhoeft A."/>
            <person name="Fritzc C."/>
            <person name="Holzer E."/>
            <person name="Moestl D."/>
            <person name="Hilbert H."/>
            <person name="Borzym K."/>
            <person name="Langer I."/>
            <person name="Beck A."/>
            <person name="Lehrach H."/>
            <person name="Reinhardt R."/>
            <person name="Pohl T.M."/>
            <person name="Eger P."/>
            <person name="Zimmermann W."/>
            <person name="Wedler H."/>
            <person name="Wambutt R."/>
            <person name="Purnelle B."/>
            <person name="Goffeau A."/>
            <person name="Cadieu E."/>
            <person name="Dreano S."/>
            <person name="Gloux S."/>
            <person name="Lelaure V."/>
            <person name="Mottier S."/>
            <person name="Galibert F."/>
            <person name="Aves S.J."/>
            <person name="Xiang Z."/>
            <person name="Hunt C."/>
            <person name="Moore K."/>
            <person name="Hurst S.M."/>
            <person name="Lucas M."/>
            <person name="Rochet M."/>
            <person name="Gaillardin C."/>
            <person name="Tallada V.A."/>
            <person name="Garzon A."/>
            <person name="Thode G."/>
            <person name="Daga R.R."/>
            <person name="Cruzado L."/>
            <person name="Jimenez J."/>
            <person name="Sanchez M."/>
            <person name="del Rey F."/>
            <person name="Benito J."/>
            <person name="Dominguez A."/>
            <person name="Revuelta J.L."/>
            <person name="Moreno S."/>
            <person name="Armstrong J."/>
            <person name="Forsburg S.L."/>
            <person name="Cerutti L."/>
            <person name="Lowe T."/>
            <person name="McCombie W.R."/>
            <person name="Paulsen I."/>
            <person name="Potashkin J."/>
            <person name="Shpakovski G.V."/>
            <person name="Ussery D."/>
            <person name="Barrell B.G."/>
            <person name="Nurse P."/>
        </authorList>
    </citation>
    <scope>NUCLEOTIDE SEQUENCE [LARGE SCALE GENOMIC DNA]</scope>
    <source>
        <strain>972 / ATCC 24843</strain>
    </source>
</reference>
<reference key="2">
    <citation type="journal article" date="2006" name="Nat. Biotechnol.">
        <title>ORFeome cloning and global analysis of protein localization in the fission yeast Schizosaccharomyces pombe.</title>
        <authorList>
            <person name="Matsuyama A."/>
            <person name="Arai R."/>
            <person name="Yashiroda Y."/>
            <person name="Shirai A."/>
            <person name="Kamata A."/>
            <person name="Sekido S."/>
            <person name="Kobayashi Y."/>
            <person name="Hashimoto A."/>
            <person name="Hamamoto M."/>
            <person name="Hiraoka Y."/>
            <person name="Horinouchi S."/>
            <person name="Yoshida M."/>
        </authorList>
    </citation>
    <scope>SUBCELLULAR LOCATION [LARGE SCALE ANALYSIS]</scope>
</reference>
<reference key="3">
    <citation type="journal article" date="2008" name="J. Proteome Res.">
        <title>Phosphoproteome analysis of fission yeast.</title>
        <authorList>
            <person name="Wilson-Grady J.T."/>
            <person name="Villen J."/>
            <person name="Gygi S.P."/>
        </authorList>
    </citation>
    <scope>PHOSPHORYLATION [LARGE SCALE ANALYSIS] AT SER-565 AND SER-566</scope>
    <scope>IDENTIFICATION BY MASS SPECTROMETRY</scope>
</reference>
<accession>O94672</accession>
<proteinExistence type="evidence at protein level"/>
<protein>
    <recommendedName>
        <fullName>Protein transport protein sec23-2</fullName>
    </recommendedName>
</protein>
<dbReference type="EMBL" id="CU329671">
    <property type="protein sequence ID" value="CAA22877.1"/>
    <property type="molecule type" value="Genomic_DNA"/>
</dbReference>
<dbReference type="PIR" id="T40674">
    <property type="entry name" value="T40674"/>
</dbReference>
<dbReference type="SMR" id="O94672"/>
<dbReference type="BioGRID" id="277679">
    <property type="interactions" value="2"/>
</dbReference>
<dbReference type="FunCoup" id="O94672">
    <property type="interactions" value="298"/>
</dbReference>
<dbReference type="STRING" id="284812.O94672"/>
<dbReference type="iPTMnet" id="O94672"/>
<dbReference type="PaxDb" id="4896-SPBC776.04.1"/>
<dbReference type="EnsemblFungi" id="SPBC776.04.1">
    <property type="protein sequence ID" value="SPBC776.04.1:pep"/>
    <property type="gene ID" value="SPBC776.04"/>
</dbReference>
<dbReference type="KEGG" id="spo:2541164"/>
<dbReference type="PomBase" id="SPBC776.04"/>
<dbReference type="VEuPathDB" id="FungiDB:SPBC776.04"/>
<dbReference type="eggNOG" id="KOG1986">
    <property type="taxonomic scope" value="Eukaryota"/>
</dbReference>
<dbReference type="HOGENOM" id="CLU_008658_3_0_1"/>
<dbReference type="InParanoid" id="O94672"/>
<dbReference type="OMA" id="LFHGERE"/>
<dbReference type="PhylomeDB" id="O94672"/>
<dbReference type="Reactome" id="R-SPO-204005">
    <property type="pathway name" value="COPII-mediated vesicle transport"/>
</dbReference>
<dbReference type="Reactome" id="R-SPO-5694530">
    <property type="pathway name" value="Cargo concentration in the ER"/>
</dbReference>
<dbReference type="Reactome" id="R-SPO-983170">
    <property type="pathway name" value="Antigen Presentation: Folding, assembly and peptide loading of class I MHC"/>
</dbReference>
<dbReference type="PRO" id="PR:O94672"/>
<dbReference type="Proteomes" id="UP000002485">
    <property type="component" value="Chromosome II"/>
</dbReference>
<dbReference type="GO" id="GO:0030127">
    <property type="term" value="C:COPII vesicle coat"/>
    <property type="evidence" value="ECO:0000318"/>
    <property type="project" value="GO_Central"/>
</dbReference>
<dbReference type="GO" id="GO:0005829">
    <property type="term" value="C:cytosol"/>
    <property type="evidence" value="ECO:0007005"/>
    <property type="project" value="PomBase"/>
</dbReference>
<dbReference type="GO" id="GO:0070971">
    <property type="term" value="C:endoplasmic reticulum exit site"/>
    <property type="evidence" value="ECO:0000318"/>
    <property type="project" value="GO_Central"/>
</dbReference>
<dbReference type="GO" id="GO:0005789">
    <property type="term" value="C:endoplasmic reticulum membrane"/>
    <property type="evidence" value="ECO:0007669"/>
    <property type="project" value="UniProtKB-SubCell"/>
</dbReference>
<dbReference type="GO" id="GO:0000139">
    <property type="term" value="C:Golgi membrane"/>
    <property type="evidence" value="ECO:0007669"/>
    <property type="project" value="UniProtKB-SubCell"/>
</dbReference>
<dbReference type="GO" id="GO:0005634">
    <property type="term" value="C:nucleus"/>
    <property type="evidence" value="ECO:0007005"/>
    <property type="project" value="PomBase"/>
</dbReference>
<dbReference type="GO" id="GO:0005096">
    <property type="term" value="F:GTPase activator activity"/>
    <property type="evidence" value="ECO:0000318"/>
    <property type="project" value="GO_Central"/>
</dbReference>
<dbReference type="GO" id="GO:0008270">
    <property type="term" value="F:zinc ion binding"/>
    <property type="evidence" value="ECO:0000255"/>
    <property type="project" value="PomBase"/>
</dbReference>
<dbReference type="GO" id="GO:0090110">
    <property type="term" value="P:COPII-coated vesicle cargo loading"/>
    <property type="evidence" value="ECO:0000318"/>
    <property type="project" value="GO_Central"/>
</dbReference>
<dbReference type="GO" id="GO:0036503">
    <property type="term" value="P:ERAD pathway"/>
    <property type="evidence" value="ECO:0000266"/>
    <property type="project" value="PomBase"/>
</dbReference>
<dbReference type="GO" id="GO:0006886">
    <property type="term" value="P:intracellular protein transport"/>
    <property type="evidence" value="ECO:0000305"/>
    <property type="project" value="PomBase"/>
</dbReference>
<dbReference type="CDD" id="cd01478">
    <property type="entry name" value="Sec23-like"/>
    <property type="match status" value="1"/>
</dbReference>
<dbReference type="CDD" id="cd11287">
    <property type="entry name" value="Sec23_C"/>
    <property type="match status" value="1"/>
</dbReference>
<dbReference type="FunFam" id="1.20.120.730:FF:000005">
    <property type="entry name" value="Protein transport protein SEC23"/>
    <property type="match status" value="1"/>
</dbReference>
<dbReference type="FunFam" id="2.30.30.380:FF:000001">
    <property type="entry name" value="Protein transport protein SEC23"/>
    <property type="match status" value="1"/>
</dbReference>
<dbReference type="FunFam" id="3.40.20.10:FF:000006">
    <property type="entry name" value="Protein transport protein SEC23"/>
    <property type="match status" value="1"/>
</dbReference>
<dbReference type="FunFam" id="3.40.50.410:FF:000008">
    <property type="entry name" value="Protein transport protein SEC23"/>
    <property type="match status" value="1"/>
</dbReference>
<dbReference type="Gene3D" id="2.60.40.1670">
    <property type="entry name" value="beta-sandwich domain of Sec23/24"/>
    <property type="match status" value="1"/>
</dbReference>
<dbReference type="Gene3D" id="1.20.120.730">
    <property type="entry name" value="Sec23/Sec24 helical domain"/>
    <property type="match status" value="1"/>
</dbReference>
<dbReference type="Gene3D" id="3.40.20.10">
    <property type="entry name" value="Severin"/>
    <property type="match status" value="1"/>
</dbReference>
<dbReference type="Gene3D" id="3.40.50.410">
    <property type="entry name" value="von Willebrand factor, type A domain"/>
    <property type="match status" value="1"/>
</dbReference>
<dbReference type="Gene3D" id="2.30.30.380">
    <property type="entry name" value="Zn-finger domain of Sec23/24"/>
    <property type="match status" value="1"/>
</dbReference>
<dbReference type="InterPro" id="IPR029006">
    <property type="entry name" value="ADF-H/Gelsolin-like_dom_sf"/>
</dbReference>
<dbReference type="InterPro" id="IPR007123">
    <property type="entry name" value="Gelsolin-like_dom"/>
</dbReference>
<dbReference type="InterPro" id="IPR036180">
    <property type="entry name" value="Gelsolin-like_dom_sf"/>
</dbReference>
<dbReference type="InterPro" id="IPR037364">
    <property type="entry name" value="Sec23"/>
</dbReference>
<dbReference type="InterPro" id="IPR006900">
    <property type="entry name" value="Sec23/24_helical_dom"/>
</dbReference>
<dbReference type="InterPro" id="IPR036175">
    <property type="entry name" value="Sec23/24_helical_dom_sf"/>
</dbReference>
<dbReference type="InterPro" id="IPR006896">
    <property type="entry name" value="Sec23/24_trunk_dom"/>
</dbReference>
<dbReference type="InterPro" id="IPR012990">
    <property type="entry name" value="Sec23_24_beta_S"/>
</dbReference>
<dbReference type="InterPro" id="IPR037550">
    <property type="entry name" value="Sec23_C"/>
</dbReference>
<dbReference type="InterPro" id="IPR036465">
    <property type="entry name" value="vWFA_dom_sf"/>
</dbReference>
<dbReference type="InterPro" id="IPR006895">
    <property type="entry name" value="Znf_Sec23_Sec24"/>
</dbReference>
<dbReference type="InterPro" id="IPR036174">
    <property type="entry name" value="Znf_Sec23_Sec24_sf"/>
</dbReference>
<dbReference type="PANTHER" id="PTHR11141">
    <property type="entry name" value="PROTEIN TRANSPORT PROTEIN SEC23"/>
    <property type="match status" value="1"/>
</dbReference>
<dbReference type="PANTHER" id="PTHR11141:SF0">
    <property type="entry name" value="PROTEIN TRANSPORT PROTEIN SEC23"/>
    <property type="match status" value="1"/>
</dbReference>
<dbReference type="Pfam" id="PF00626">
    <property type="entry name" value="Gelsolin"/>
    <property type="match status" value="1"/>
</dbReference>
<dbReference type="Pfam" id="PF08033">
    <property type="entry name" value="Sec23_BS"/>
    <property type="match status" value="1"/>
</dbReference>
<dbReference type="Pfam" id="PF04815">
    <property type="entry name" value="Sec23_helical"/>
    <property type="match status" value="1"/>
</dbReference>
<dbReference type="Pfam" id="PF04811">
    <property type="entry name" value="Sec23_trunk"/>
    <property type="match status" value="1"/>
</dbReference>
<dbReference type="Pfam" id="PF04810">
    <property type="entry name" value="zf-Sec23_Sec24"/>
    <property type="match status" value="1"/>
</dbReference>
<dbReference type="SUPFAM" id="SSF81995">
    <property type="entry name" value="beta-sandwich domain of Sec23/24"/>
    <property type="match status" value="1"/>
</dbReference>
<dbReference type="SUPFAM" id="SSF82754">
    <property type="entry name" value="C-terminal, gelsolin-like domain of Sec23/24"/>
    <property type="match status" value="1"/>
</dbReference>
<dbReference type="SUPFAM" id="SSF81811">
    <property type="entry name" value="Helical domain of Sec23/24"/>
    <property type="match status" value="1"/>
</dbReference>
<dbReference type="SUPFAM" id="SSF53300">
    <property type="entry name" value="vWA-like"/>
    <property type="match status" value="1"/>
</dbReference>
<dbReference type="SUPFAM" id="SSF82919">
    <property type="entry name" value="Zn-finger domain of Sec23/24"/>
    <property type="match status" value="1"/>
</dbReference>
<evidence type="ECO:0000250" key="1"/>
<evidence type="ECO:0000269" key="2">
    <source>
    </source>
</evidence>
<evidence type="ECO:0000269" key="3">
    <source>
    </source>
</evidence>
<evidence type="ECO:0000305" key="4"/>
<keyword id="KW-0963">Cytoplasm</keyword>
<keyword id="KW-0968">Cytoplasmic vesicle</keyword>
<keyword id="KW-0256">Endoplasmic reticulum</keyword>
<keyword id="KW-0931">ER-Golgi transport</keyword>
<keyword id="KW-0333">Golgi apparatus</keyword>
<keyword id="KW-0472">Membrane</keyword>
<keyword id="KW-0479">Metal-binding</keyword>
<keyword id="KW-0597">Phosphoprotein</keyword>
<keyword id="KW-0653">Protein transport</keyword>
<keyword id="KW-1185">Reference proteome</keyword>
<keyword id="KW-0813">Transport</keyword>
<keyword id="KW-0862">Zinc</keyword>
<feature type="chain" id="PRO_0000295472" description="Protein transport protein sec23-2">
    <location>
        <begin position="1"/>
        <end position="765"/>
    </location>
</feature>
<feature type="binding site" evidence="1">
    <location>
        <position position="56"/>
    </location>
    <ligand>
        <name>Zn(2+)</name>
        <dbReference type="ChEBI" id="CHEBI:29105"/>
    </ligand>
</feature>
<feature type="binding site" evidence="1">
    <location>
        <position position="60"/>
    </location>
    <ligand>
        <name>Zn(2+)</name>
        <dbReference type="ChEBI" id="CHEBI:29105"/>
    </ligand>
</feature>
<feature type="binding site" evidence="1">
    <location>
        <position position="79"/>
    </location>
    <ligand>
        <name>Zn(2+)</name>
        <dbReference type="ChEBI" id="CHEBI:29105"/>
    </ligand>
</feature>
<feature type="binding site" evidence="1">
    <location>
        <position position="82"/>
    </location>
    <ligand>
        <name>Zn(2+)</name>
        <dbReference type="ChEBI" id="CHEBI:29105"/>
    </ligand>
</feature>
<feature type="modified residue" description="Phosphoserine" evidence="3">
    <location>
        <position position="565"/>
    </location>
</feature>
<feature type="modified residue" description="Phosphoserine" evidence="3">
    <location>
        <position position="566"/>
    </location>
</feature>
<sequence>MNFEDIEDQDGIRLSWNTFSATPAENARAVIPIAAMYTPLHENERMTIEQYDPVACRAPCRAVLNPYCHVDLRARFWICPFCFQRNPLPAQYSDISSNSLPLELLSQSTTMEYVLSKPVKSPPVFLFVMDTAVDESELTALKDAVIVSLSLLPPDAIVGLITYGSLIQVHEIGFEAMPKSYVFQPAADYSTMKLQQLLALSGNQIRSSSSKAKISGTGITLNLGAASRFLMPVQKCEMHLLNILEQLQPDCLEVPAGQRQLRCTGAAVKIASDLLGIAFPKCGSRIELFCGGPCTVGLGQVVSTELKEPMRSHSEIANDKAKHFKKSKKFYSSLAERLSNQGHALDLFAGCLDQVGIMEMENLVNNTGGAIVLSDSFTTSIFKQSFQRLFSVDASGYLKMGFMANLEVLTSKGLTICGMIGNGVGENKKGTNISDTQIGISKTNSWKMAAISPKSSYALYFDLGKEMGNPNSQRPTQAFIQFLTYYQHSSGTYRLRVTTISRSFITGNAKSISESFDQEAAAAIVARMALFKCQTEDEMSVTRWIDRNLIRLCQHFADYRKEDPSSFRLLPNFTLYPQFIFHLRRSPFLHIFNNSPDETSFYRHMLNVADVNDSLIMIQPTLQSYSFNEPEGVPVLLDSVSIKPDVILLLDTYFHILIFHGSTIAQWRNAGYQEQPEYVNLKELLLAPRLEVTELLADRFPIPRFIVCDQGGSQARFLLSRINPSVSFNKSSQFSPMSKDSETVLTDDVNLQKFMDHLRKMAVIS</sequence>
<organism>
    <name type="scientific">Schizosaccharomyces pombe (strain 972 / ATCC 24843)</name>
    <name type="common">Fission yeast</name>
    <dbReference type="NCBI Taxonomy" id="284812"/>
    <lineage>
        <taxon>Eukaryota</taxon>
        <taxon>Fungi</taxon>
        <taxon>Dikarya</taxon>
        <taxon>Ascomycota</taxon>
        <taxon>Taphrinomycotina</taxon>
        <taxon>Schizosaccharomycetes</taxon>
        <taxon>Schizosaccharomycetales</taxon>
        <taxon>Schizosaccharomycetaceae</taxon>
        <taxon>Schizosaccharomyces</taxon>
    </lineage>
</organism>
<comment type="function">
    <text evidence="1">Component of the coat protein complex II (COPII) which promotes the formation of transport vesicles from the endoplasmic reticulum (ER). The coat has two main functions, the physical deformation of the endoplasmic reticulum membrane into vesicles and the selection of cargo molecules (By similarity).</text>
</comment>
<comment type="subunit">
    <text evidence="1">The COPII coat is composed of at least 5 proteins: the sec23/24 complex, the sec13/31 complex, and the protein sar1.</text>
</comment>
<comment type="subcellular location">
    <subcellularLocation>
        <location evidence="2">Cytoplasm</location>
    </subcellularLocation>
    <subcellularLocation>
        <location evidence="1">Cytoplasmic vesicle</location>
        <location evidence="1">COPII-coated vesicle membrane</location>
        <topology evidence="1">Peripheral membrane protein</topology>
        <orientation evidence="1">Cytoplasmic side</orientation>
    </subcellularLocation>
    <subcellularLocation>
        <location evidence="1">Endoplasmic reticulum membrane</location>
        <topology evidence="1">Peripheral membrane protein</topology>
        <orientation evidence="1">Cytoplasmic side</orientation>
    </subcellularLocation>
    <subcellularLocation>
        <location evidence="1">Golgi apparatus membrane</location>
        <topology evidence="1">Peripheral membrane protein</topology>
        <orientation evidence="1">Cytoplasmic side</orientation>
    </subcellularLocation>
</comment>
<comment type="similarity">
    <text evidence="4">Belongs to the SEC23/SEC24 family. SEC23 subfamily.</text>
</comment>